<name>YDOC_SCHPO</name>
<keyword id="KW-1185">Reference proteome</keyword>
<gene>
    <name type="ORF">SPAC15A10.12c</name>
</gene>
<sequence length="148" mass="17135">MVKPRLVFLSIAGPKDEQLYLEIIDPKEKHLLARYQYLGELSLDVINDLVNDGERTSNDCFLGLLGVEEDISTYAFYSNTKVKFILAVKAPDYVVKETEIRQLLRRIYTIHTHAVCNPFSMDLTPETLKTSIYFKESLHQLISDWNIH</sequence>
<feature type="chain" id="PRO_0000116646" description="Uncharacterized protein C15A10.12c">
    <location>
        <begin position="1"/>
        <end position="148"/>
    </location>
</feature>
<organism>
    <name type="scientific">Schizosaccharomyces pombe (strain 972 / ATCC 24843)</name>
    <name type="common">Fission yeast</name>
    <dbReference type="NCBI Taxonomy" id="284812"/>
    <lineage>
        <taxon>Eukaryota</taxon>
        <taxon>Fungi</taxon>
        <taxon>Dikarya</taxon>
        <taxon>Ascomycota</taxon>
        <taxon>Taphrinomycotina</taxon>
        <taxon>Schizosaccharomycetes</taxon>
        <taxon>Schizosaccharomycetales</taxon>
        <taxon>Schizosaccharomycetaceae</taxon>
        <taxon>Schizosaccharomyces</taxon>
    </lineage>
</organism>
<protein>
    <recommendedName>
        <fullName>Uncharacterized protein C15A10.12c</fullName>
    </recommendedName>
</protein>
<accession>O13732</accession>
<reference key="1">
    <citation type="journal article" date="2002" name="Nature">
        <title>The genome sequence of Schizosaccharomyces pombe.</title>
        <authorList>
            <person name="Wood V."/>
            <person name="Gwilliam R."/>
            <person name="Rajandream M.A."/>
            <person name="Lyne M.H."/>
            <person name="Lyne R."/>
            <person name="Stewart A."/>
            <person name="Sgouros J.G."/>
            <person name="Peat N."/>
            <person name="Hayles J."/>
            <person name="Baker S.G."/>
            <person name="Basham D."/>
            <person name="Bowman S."/>
            <person name="Brooks K."/>
            <person name="Brown D."/>
            <person name="Brown S."/>
            <person name="Chillingworth T."/>
            <person name="Churcher C.M."/>
            <person name="Collins M."/>
            <person name="Connor R."/>
            <person name="Cronin A."/>
            <person name="Davis P."/>
            <person name="Feltwell T."/>
            <person name="Fraser A."/>
            <person name="Gentles S."/>
            <person name="Goble A."/>
            <person name="Hamlin N."/>
            <person name="Harris D.E."/>
            <person name="Hidalgo J."/>
            <person name="Hodgson G."/>
            <person name="Holroyd S."/>
            <person name="Hornsby T."/>
            <person name="Howarth S."/>
            <person name="Huckle E.J."/>
            <person name="Hunt S."/>
            <person name="Jagels K."/>
            <person name="James K.D."/>
            <person name="Jones L."/>
            <person name="Jones M."/>
            <person name="Leather S."/>
            <person name="McDonald S."/>
            <person name="McLean J."/>
            <person name="Mooney P."/>
            <person name="Moule S."/>
            <person name="Mungall K.L."/>
            <person name="Murphy L.D."/>
            <person name="Niblett D."/>
            <person name="Odell C."/>
            <person name="Oliver K."/>
            <person name="O'Neil S."/>
            <person name="Pearson D."/>
            <person name="Quail M.A."/>
            <person name="Rabbinowitsch E."/>
            <person name="Rutherford K.M."/>
            <person name="Rutter S."/>
            <person name="Saunders D."/>
            <person name="Seeger K."/>
            <person name="Sharp S."/>
            <person name="Skelton J."/>
            <person name="Simmonds M.N."/>
            <person name="Squares R."/>
            <person name="Squares S."/>
            <person name="Stevens K."/>
            <person name="Taylor K."/>
            <person name="Taylor R.G."/>
            <person name="Tivey A."/>
            <person name="Walsh S.V."/>
            <person name="Warren T."/>
            <person name="Whitehead S."/>
            <person name="Woodward J.R."/>
            <person name="Volckaert G."/>
            <person name="Aert R."/>
            <person name="Robben J."/>
            <person name="Grymonprez B."/>
            <person name="Weltjens I."/>
            <person name="Vanstreels E."/>
            <person name="Rieger M."/>
            <person name="Schaefer M."/>
            <person name="Mueller-Auer S."/>
            <person name="Gabel C."/>
            <person name="Fuchs M."/>
            <person name="Duesterhoeft A."/>
            <person name="Fritzc C."/>
            <person name="Holzer E."/>
            <person name="Moestl D."/>
            <person name="Hilbert H."/>
            <person name="Borzym K."/>
            <person name="Langer I."/>
            <person name="Beck A."/>
            <person name="Lehrach H."/>
            <person name="Reinhardt R."/>
            <person name="Pohl T.M."/>
            <person name="Eger P."/>
            <person name="Zimmermann W."/>
            <person name="Wedler H."/>
            <person name="Wambutt R."/>
            <person name="Purnelle B."/>
            <person name="Goffeau A."/>
            <person name="Cadieu E."/>
            <person name="Dreano S."/>
            <person name="Gloux S."/>
            <person name="Lelaure V."/>
            <person name="Mottier S."/>
            <person name="Galibert F."/>
            <person name="Aves S.J."/>
            <person name="Xiang Z."/>
            <person name="Hunt C."/>
            <person name="Moore K."/>
            <person name="Hurst S.M."/>
            <person name="Lucas M."/>
            <person name="Rochet M."/>
            <person name="Gaillardin C."/>
            <person name="Tallada V.A."/>
            <person name="Garzon A."/>
            <person name="Thode G."/>
            <person name="Daga R.R."/>
            <person name="Cruzado L."/>
            <person name="Jimenez J."/>
            <person name="Sanchez M."/>
            <person name="del Rey F."/>
            <person name="Benito J."/>
            <person name="Dominguez A."/>
            <person name="Revuelta J.L."/>
            <person name="Moreno S."/>
            <person name="Armstrong J."/>
            <person name="Forsburg S.L."/>
            <person name="Cerutti L."/>
            <person name="Lowe T."/>
            <person name="McCombie W.R."/>
            <person name="Paulsen I."/>
            <person name="Potashkin J."/>
            <person name="Shpakovski G.V."/>
            <person name="Ussery D."/>
            <person name="Barrell B.G."/>
            <person name="Nurse P."/>
        </authorList>
    </citation>
    <scope>NUCLEOTIDE SEQUENCE [LARGE SCALE GENOMIC DNA]</scope>
    <source>
        <strain>972 / ATCC 24843</strain>
    </source>
</reference>
<proteinExistence type="predicted"/>
<dbReference type="EMBL" id="CU329670">
    <property type="protein sequence ID" value="CAB10109.2"/>
    <property type="molecule type" value="Genomic_DNA"/>
</dbReference>
<dbReference type="PIR" id="T37712">
    <property type="entry name" value="T37712"/>
</dbReference>
<dbReference type="SMR" id="O13732"/>
<dbReference type="FunCoup" id="O13732">
    <property type="interactions" value="43"/>
</dbReference>
<dbReference type="STRING" id="284812.O13732"/>
<dbReference type="PaxDb" id="4896-SPAC15A10.12c.1"/>
<dbReference type="EnsemblFungi" id="SPAC15A10.12c.1">
    <property type="protein sequence ID" value="SPAC15A10.12c.1:pep"/>
    <property type="gene ID" value="SPAC15A10.12c"/>
</dbReference>
<dbReference type="KEGG" id="spo:2542766"/>
<dbReference type="PomBase" id="SPAC15A10.12c"/>
<dbReference type="VEuPathDB" id="FungiDB:SPAC15A10.12c"/>
<dbReference type="eggNOG" id="KOG3444">
    <property type="taxonomic scope" value="Eukaryota"/>
</dbReference>
<dbReference type="HOGENOM" id="CLU_085828_2_3_1"/>
<dbReference type="InParanoid" id="O13732"/>
<dbReference type="OMA" id="DISAYGY"/>
<dbReference type="PhylomeDB" id="O13732"/>
<dbReference type="Reactome" id="R-SPO-204005">
    <property type="pathway name" value="COPII-mediated vesicle transport"/>
</dbReference>
<dbReference type="Reactome" id="R-SPO-8876198">
    <property type="pathway name" value="RAB GEFs exchange GTP for GDP on RABs"/>
</dbReference>
<dbReference type="PRO" id="PR:O13732"/>
<dbReference type="Proteomes" id="UP000002485">
    <property type="component" value="Chromosome I"/>
</dbReference>
<dbReference type="GO" id="GO:0005737">
    <property type="term" value="C:cytoplasm"/>
    <property type="evidence" value="ECO:0000318"/>
    <property type="project" value="GO_Central"/>
</dbReference>
<dbReference type="GO" id="GO:0005829">
    <property type="term" value="C:cytosol"/>
    <property type="evidence" value="ECO:0007005"/>
    <property type="project" value="PomBase"/>
</dbReference>
<dbReference type="GO" id="GO:0005634">
    <property type="term" value="C:nucleus"/>
    <property type="evidence" value="ECO:0007005"/>
    <property type="project" value="PomBase"/>
</dbReference>
<dbReference type="GO" id="GO:0030008">
    <property type="term" value="C:TRAPP complex"/>
    <property type="evidence" value="ECO:0000318"/>
    <property type="project" value="GO_Central"/>
</dbReference>
<dbReference type="GO" id="GO:1990070">
    <property type="term" value="C:TRAPPI protein complex"/>
    <property type="evidence" value="ECO:0000303"/>
    <property type="project" value="PomBase"/>
</dbReference>
<dbReference type="GO" id="GO:1990071">
    <property type="term" value="C:TRAPPII protein complex"/>
    <property type="evidence" value="ECO:0000303"/>
    <property type="project" value="PomBase"/>
</dbReference>
<dbReference type="GO" id="GO:0006888">
    <property type="term" value="P:endoplasmic reticulum to Golgi vesicle-mediated transport"/>
    <property type="evidence" value="ECO:0000318"/>
    <property type="project" value="GO_Central"/>
</dbReference>
<dbReference type="FunFam" id="3.30.450.70:FF:000036">
    <property type="match status" value="1"/>
</dbReference>
<dbReference type="Gene3D" id="3.30.450.70">
    <property type="match status" value="1"/>
</dbReference>
<dbReference type="InterPro" id="IPR011012">
    <property type="entry name" value="Longin-like_dom_sf"/>
</dbReference>
<dbReference type="InterPro" id="IPR006722">
    <property type="entry name" value="Sedlin"/>
</dbReference>
<dbReference type="PANTHER" id="PTHR12403">
    <property type="entry name" value="TRAFFICKING PROTEIN PARTICLE COMPLEX SUBUNIT 2"/>
    <property type="match status" value="1"/>
</dbReference>
<dbReference type="Pfam" id="PF04628">
    <property type="entry name" value="Sedlin_N"/>
    <property type="match status" value="1"/>
</dbReference>
<dbReference type="SUPFAM" id="SSF64356">
    <property type="entry name" value="SNARE-like"/>
    <property type="match status" value="1"/>
</dbReference>